<accession>P0CN76</accession>
<accession>P40908</accession>
<accession>Q55IG6</accession>
<accession>Q5K807</accession>
<gene>
    <name type="primary">GAL7</name>
    <name type="ordered locus">CNM00620</name>
</gene>
<comment type="catalytic activity">
    <reaction evidence="2">
        <text>alpha-D-galactose 1-phosphate + UDP-alpha-D-glucose = alpha-D-glucose 1-phosphate + UDP-alpha-D-galactose</text>
        <dbReference type="Rhea" id="RHEA:13989"/>
        <dbReference type="ChEBI" id="CHEBI:58336"/>
        <dbReference type="ChEBI" id="CHEBI:58601"/>
        <dbReference type="ChEBI" id="CHEBI:58885"/>
        <dbReference type="ChEBI" id="CHEBI:66914"/>
        <dbReference type="EC" id="2.7.7.12"/>
    </reaction>
</comment>
<comment type="cofactor">
    <cofactor evidence="2">
        <name>Zn(2+)</name>
        <dbReference type="ChEBI" id="CHEBI:29105"/>
    </cofactor>
    <text evidence="2">Binds 1 zinc ion per subunit. Zinc binding seems to play a structural role.</text>
</comment>
<comment type="pathway">
    <text>Carbohydrate metabolism; galactose metabolism.</text>
</comment>
<comment type="subunit">
    <text evidence="1">Homodimer.</text>
</comment>
<comment type="similarity">
    <text evidence="4">Belongs to the galactose-1-phosphate uridylyltransferase type 1 family.</text>
</comment>
<comment type="sequence caution" evidence="4">
    <conflict type="erroneous initiation">
        <sequence resource="EMBL-CDS" id="AAW46832"/>
    </conflict>
    <text>Extended N-terminus.</text>
</comment>
<proteinExistence type="inferred from homology"/>
<organism>
    <name type="scientific">Cryptococcus neoformans var. neoformans serotype D (strain JEC21 / ATCC MYA-565)</name>
    <name type="common">Filobasidiella neoformans</name>
    <dbReference type="NCBI Taxonomy" id="214684"/>
    <lineage>
        <taxon>Eukaryota</taxon>
        <taxon>Fungi</taxon>
        <taxon>Dikarya</taxon>
        <taxon>Basidiomycota</taxon>
        <taxon>Agaricomycotina</taxon>
        <taxon>Tremellomycetes</taxon>
        <taxon>Tremellales</taxon>
        <taxon>Cryptococcaceae</taxon>
        <taxon>Cryptococcus</taxon>
        <taxon>Cryptococcus neoformans species complex</taxon>
    </lineage>
</organism>
<dbReference type="EC" id="2.7.7.12" evidence="2"/>
<dbReference type="EMBL" id="U16994">
    <property type="protein sequence ID" value="AAA92683.1"/>
    <property type="molecule type" value="Genomic_DNA"/>
</dbReference>
<dbReference type="EMBL" id="AE017353">
    <property type="protein sequence ID" value="AAW46832.2"/>
    <property type="status" value="ALT_INIT"/>
    <property type="molecule type" value="Genomic_DNA"/>
</dbReference>
<dbReference type="PIR" id="S69795">
    <property type="entry name" value="S69795"/>
</dbReference>
<dbReference type="RefSeq" id="XP_568349.1">
    <property type="nucleotide sequence ID" value="XM_568349.1"/>
</dbReference>
<dbReference type="SMR" id="P0CN76"/>
<dbReference type="FunCoup" id="P0CN76">
    <property type="interactions" value="191"/>
</dbReference>
<dbReference type="STRING" id="214684.P0CN76"/>
<dbReference type="PaxDb" id="214684-P0CN76"/>
<dbReference type="EnsemblFungi" id="AAW46832">
    <property type="protein sequence ID" value="AAW46832"/>
    <property type="gene ID" value="CNM00620"/>
</dbReference>
<dbReference type="GeneID" id="3255268"/>
<dbReference type="KEGG" id="cne:CNM00620"/>
<dbReference type="eggNOG" id="KOG2958">
    <property type="taxonomic scope" value="Eukaryota"/>
</dbReference>
<dbReference type="HOGENOM" id="CLU_029960_0_0_1"/>
<dbReference type="InParanoid" id="P0CN76"/>
<dbReference type="OMA" id="MIASHRQ"/>
<dbReference type="OrthoDB" id="418412at2759"/>
<dbReference type="UniPathway" id="UPA00214"/>
<dbReference type="Proteomes" id="UP000002149">
    <property type="component" value="Chromosome 13"/>
</dbReference>
<dbReference type="GO" id="GO:0005737">
    <property type="term" value="C:cytoplasm"/>
    <property type="evidence" value="ECO:0000318"/>
    <property type="project" value="GO_Central"/>
</dbReference>
<dbReference type="GO" id="GO:0008108">
    <property type="term" value="F:UDP-glucose:hexose-1-phosphate uridylyltransferase activity"/>
    <property type="evidence" value="ECO:0000318"/>
    <property type="project" value="GO_Central"/>
</dbReference>
<dbReference type="GO" id="GO:0008270">
    <property type="term" value="F:zinc ion binding"/>
    <property type="evidence" value="ECO:0007669"/>
    <property type="project" value="InterPro"/>
</dbReference>
<dbReference type="GO" id="GO:0033499">
    <property type="term" value="P:galactose catabolic process via UDP-galactose, Leloir pathway"/>
    <property type="evidence" value="ECO:0000318"/>
    <property type="project" value="GO_Central"/>
</dbReference>
<dbReference type="CDD" id="cd00608">
    <property type="entry name" value="GalT"/>
    <property type="match status" value="1"/>
</dbReference>
<dbReference type="FunFam" id="3.30.428.10:FF:000001">
    <property type="entry name" value="Galactose-1-phosphate uridylyltransferase"/>
    <property type="match status" value="1"/>
</dbReference>
<dbReference type="FunFam" id="3.30.428.10:FF:000002">
    <property type="entry name" value="Galactose-1-phosphate uridylyltransferase"/>
    <property type="match status" value="1"/>
</dbReference>
<dbReference type="Gene3D" id="3.30.428.10">
    <property type="entry name" value="HIT-like"/>
    <property type="match status" value="2"/>
</dbReference>
<dbReference type="InterPro" id="IPR001937">
    <property type="entry name" value="GalP_UDPtransf1"/>
</dbReference>
<dbReference type="InterPro" id="IPR019779">
    <property type="entry name" value="GalP_UDPtransf1_His-AS"/>
</dbReference>
<dbReference type="InterPro" id="IPR005850">
    <property type="entry name" value="GalP_Utransf_C"/>
</dbReference>
<dbReference type="InterPro" id="IPR005849">
    <property type="entry name" value="GalP_Utransf_N"/>
</dbReference>
<dbReference type="InterPro" id="IPR036265">
    <property type="entry name" value="HIT-like_sf"/>
</dbReference>
<dbReference type="NCBIfam" id="TIGR00209">
    <property type="entry name" value="galT_1"/>
    <property type="match status" value="1"/>
</dbReference>
<dbReference type="NCBIfam" id="NF008724">
    <property type="entry name" value="PRK11720.1"/>
    <property type="match status" value="1"/>
</dbReference>
<dbReference type="PANTHER" id="PTHR11943">
    <property type="entry name" value="GALACTOSE-1-PHOSPHATE URIDYLYLTRANSFERASE"/>
    <property type="match status" value="1"/>
</dbReference>
<dbReference type="PANTHER" id="PTHR11943:SF1">
    <property type="entry name" value="GALACTOSE-1-PHOSPHATE URIDYLYLTRANSFERASE"/>
    <property type="match status" value="1"/>
</dbReference>
<dbReference type="Pfam" id="PF02744">
    <property type="entry name" value="GalP_UDP_tr_C"/>
    <property type="match status" value="1"/>
</dbReference>
<dbReference type="Pfam" id="PF01087">
    <property type="entry name" value="GalP_UDP_transf"/>
    <property type="match status" value="1"/>
</dbReference>
<dbReference type="PIRSF" id="PIRSF000808">
    <property type="entry name" value="GalT"/>
    <property type="match status" value="1"/>
</dbReference>
<dbReference type="SUPFAM" id="SSF54197">
    <property type="entry name" value="HIT-like"/>
    <property type="match status" value="2"/>
</dbReference>
<dbReference type="PROSITE" id="PS00117">
    <property type="entry name" value="GAL_P_UDP_TRANSF_I"/>
    <property type="match status" value="1"/>
</dbReference>
<feature type="chain" id="PRO_0000169888" description="Galactose-1-phosphate uridylyltransferase">
    <location>
        <begin position="1"/>
        <end position="381"/>
    </location>
</feature>
<feature type="active site" description="Tele-UMP-histidine intermediate" evidence="3">
    <location>
        <position position="188"/>
    </location>
</feature>
<feature type="binding site" evidence="3">
    <location>
        <position position="65"/>
    </location>
    <ligand>
        <name>Zn(2+)</name>
        <dbReference type="ChEBI" id="CHEBI:29105"/>
    </ligand>
</feature>
<feature type="binding site" evidence="3">
    <location>
        <position position="68"/>
    </location>
    <ligand>
        <name>Zn(2+)</name>
        <dbReference type="ChEBI" id="CHEBI:29105"/>
    </ligand>
</feature>
<feature type="binding site" description="in other chain" evidence="1">
    <location>
        <begin position="90"/>
        <end position="91"/>
    </location>
    <ligand>
        <name>UDP-alpha-D-glucose</name>
        <dbReference type="ChEBI" id="CHEBI:58885"/>
        <note>ligand shared between dimeric partners</note>
    </ligand>
</feature>
<feature type="binding site" evidence="3">
    <location>
        <position position="131"/>
    </location>
    <ligand>
        <name>Zn(2+)</name>
        <dbReference type="ChEBI" id="CHEBI:29105"/>
    </ligand>
</feature>
<feature type="binding site" evidence="1">
    <location>
        <position position="175"/>
    </location>
    <ligand>
        <name>UDP-alpha-D-glucose</name>
        <dbReference type="ChEBI" id="CHEBI:58885"/>
        <note>ligand shared between dimeric partners</note>
    </ligand>
</feature>
<feature type="binding site" evidence="3">
    <location>
        <position position="186"/>
    </location>
    <ligand>
        <name>Zn(2+)</name>
        <dbReference type="ChEBI" id="CHEBI:29105"/>
    </ligand>
</feature>
<feature type="binding site" description="in other chain" evidence="1">
    <location>
        <position position="190"/>
    </location>
    <ligand>
        <name>UDP-alpha-D-glucose</name>
        <dbReference type="ChEBI" id="CHEBI:58885"/>
        <note>ligand shared between dimeric partners</note>
    </ligand>
</feature>
<feature type="binding site" evidence="2">
    <location>
        <position position="204"/>
    </location>
    <ligand>
        <name>Fe cation</name>
        <dbReference type="ChEBI" id="CHEBI:24875"/>
    </ligand>
</feature>
<feature type="binding site" evidence="2">
    <location>
        <position position="306"/>
    </location>
    <ligand>
        <name>Fe cation</name>
        <dbReference type="ChEBI" id="CHEBI:24875"/>
    </ligand>
</feature>
<feature type="binding site" evidence="2">
    <location>
        <position position="323"/>
    </location>
    <ligand>
        <name>Fe cation</name>
        <dbReference type="ChEBI" id="CHEBI:24875"/>
    </ligand>
</feature>
<feature type="binding site" evidence="2">
    <location>
        <position position="325"/>
    </location>
    <ligand>
        <name>Fe cation</name>
        <dbReference type="ChEBI" id="CHEBI:24875"/>
    </ligand>
</feature>
<feature type="binding site" description="in other chain" evidence="1">
    <location>
        <begin position="338"/>
        <end position="341"/>
    </location>
    <ligand>
        <name>UDP-alpha-D-glucose</name>
        <dbReference type="ChEBI" id="CHEBI:58885"/>
        <note>ligand shared between dimeric partners</note>
    </ligand>
</feature>
<feature type="binding site" description="in other chain" evidence="1">
    <location>
        <begin position="343"/>
        <end position="344"/>
    </location>
    <ligand>
        <name>UDP-alpha-D-glucose</name>
        <dbReference type="ChEBI" id="CHEBI:58885"/>
        <note>ligand shared between dimeric partners</note>
    </ligand>
</feature>
<protein>
    <recommendedName>
        <fullName>Galactose-1-phosphate uridylyltransferase</fullName>
        <shortName>Gal-1-P uridylyltransferase</shortName>
        <ecNumber evidence="2">2.7.7.12</ecNumber>
    </recommendedName>
    <alternativeName>
        <fullName>UDP-glucose--hexose-1-phosphate uridylyltransferase</fullName>
    </alternativeName>
</protein>
<keyword id="KW-0119">Carbohydrate metabolism</keyword>
<keyword id="KW-0299">Galactose metabolism</keyword>
<keyword id="KW-0408">Iron</keyword>
<keyword id="KW-0479">Metal-binding</keyword>
<keyword id="KW-0548">Nucleotidyltransferase</keyword>
<keyword id="KW-1185">Reference proteome</keyword>
<keyword id="KW-0808">Transferase</keyword>
<keyword id="KW-0862">Zinc</keyword>
<name>GAL7_CRYNJ</name>
<evidence type="ECO:0000250" key="1">
    <source>
        <dbReference type="UniProtKB" id="P07902"/>
    </source>
</evidence>
<evidence type="ECO:0000250" key="2">
    <source>
        <dbReference type="UniProtKB" id="P09148"/>
    </source>
</evidence>
<evidence type="ECO:0000255" key="3">
    <source>
        <dbReference type="PROSITE-ProRule" id="PRU10033"/>
    </source>
</evidence>
<evidence type="ECO:0000305" key="4"/>
<sequence>MTATHTHSNGSNDFTPVSINDHVHRRFNPLLGKHVLVSPHRSLRPWNGQKETPAIPVETPHDSKCYLCPGNKRTTGQHNPDYKGIYVFENDFPALLPDPLAVGTNKISDDPLFQSEPVRGRCKVICFHPRHDLTMAAMRISEINHVLDGWKDVYAEEGKIMQEESSDGCVQIFENRGAMMGCSAPHPHGQVWTTSFVPDEPATEIENFVRYASGRSGSHMLLDYALREVKARERVVTLHESGWVAVVPYWAAWPFEILLMPYKRHIPSILQLTAEEQTGLATILKDVLSRYDNLFSCPFPYSMGLHQSPLPPTDPTSNSAQVHFHFYPPLLRSATVRKFMVGFELLGEAQRDIVPEQAAVRLRESLPHKRATLSNDKPYNP</sequence>
<reference key="1">
    <citation type="journal article" date="1995" name="Mol. Microbiol.">
        <title>The Cryptococcus neoformans GAL7 gene and its use as an inducible promoter.</title>
        <authorList>
            <person name="Wickes B.L."/>
            <person name="Edman J.C."/>
        </authorList>
    </citation>
    <scope>NUCLEOTIDE SEQUENCE [GENOMIC DNA]</scope>
</reference>
<reference key="2">
    <citation type="journal article" date="2005" name="Science">
        <title>The genome of the basidiomycetous yeast and human pathogen Cryptococcus neoformans.</title>
        <authorList>
            <person name="Loftus B.J."/>
            <person name="Fung E."/>
            <person name="Roncaglia P."/>
            <person name="Rowley D."/>
            <person name="Amedeo P."/>
            <person name="Bruno D."/>
            <person name="Vamathevan J."/>
            <person name="Miranda M."/>
            <person name="Anderson I.J."/>
            <person name="Fraser J.A."/>
            <person name="Allen J.E."/>
            <person name="Bosdet I.E."/>
            <person name="Brent M.R."/>
            <person name="Chiu R."/>
            <person name="Doering T.L."/>
            <person name="Donlin M.J."/>
            <person name="D'Souza C.A."/>
            <person name="Fox D.S."/>
            <person name="Grinberg V."/>
            <person name="Fu J."/>
            <person name="Fukushima M."/>
            <person name="Haas B.J."/>
            <person name="Huang J.C."/>
            <person name="Janbon G."/>
            <person name="Jones S.J.M."/>
            <person name="Koo H.L."/>
            <person name="Krzywinski M.I."/>
            <person name="Kwon-Chung K.J."/>
            <person name="Lengeler K.B."/>
            <person name="Maiti R."/>
            <person name="Marra M.A."/>
            <person name="Marra R.E."/>
            <person name="Mathewson C.A."/>
            <person name="Mitchell T.G."/>
            <person name="Pertea M."/>
            <person name="Riggs F.R."/>
            <person name="Salzberg S.L."/>
            <person name="Schein J.E."/>
            <person name="Shvartsbeyn A."/>
            <person name="Shin H."/>
            <person name="Shumway M."/>
            <person name="Specht C.A."/>
            <person name="Suh B.B."/>
            <person name="Tenney A."/>
            <person name="Utterback T.R."/>
            <person name="Wickes B.L."/>
            <person name="Wortman J.R."/>
            <person name="Wye N.H."/>
            <person name="Kronstad J.W."/>
            <person name="Lodge J.K."/>
            <person name="Heitman J."/>
            <person name="Davis R.W."/>
            <person name="Fraser C.M."/>
            <person name="Hyman R.W."/>
        </authorList>
    </citation>
    <scope>NUCLEOTIDE SEQUENCE [LARGE SCALE GENOMIC DNA]</scope>
    <source>
        <strain>JEC21 / ATCC MYA-565</strain>
    </source>
</reference>